<name>RS4_LEGPH</name>
<gene>
    <name evidence="1" type="primary">rpsD</name>
    <name type="ordered locus">lpg0353</name>
</gene>
<protein>
    <recommendedName>
        <fullName evidence="1">Small ribosomal subunit protein uS4</fullName>
    </recommendedName>
    <alternativeName>
        <fullName evidence="2">30S ribosomal protein S4</fullName>
    </alternativeName>
</protein>
<keyword id="KW-1185">Reference proteome</keyword>
<keyword id="KW-0687">Ribonucleoprotein</keyword>
<keyword id="KW-0689">Ribosomal protein</keyword>
<keyword id="KW-0694">RNA-binding</keyword>
<keyword id="KW-0699">rRNA-binding</keyword>
<accession>Q5ZYL9</accession>
<organism>
    <name type="scientific">Legionella pneumophila subsp. pneumophila (strain Philadelphia 1 / ATCC 33152 / DSM 7513)</name>
    <dbReference type="NCBI Taxonomy" id="272624"/>
    <lineage>
        <taxon>Bacteria</taxon>
        <taxon>Pseudomonadati</taxon>
        <taxon>Pseudomonadota</taxon>
        <taxon>Gammaproteobacteria</taxon>
        <taxon>Legionellales</taxon>
        <taxon>Legionellaceae</taxon>
        <taxon>Legionella</taxon>
    </lineage>
</organism>
<dbReference type="EMBL" id="AE017354">
    <property type="protein sequence ID" value="AAU26450.1"/>
    <property type="molecule type" value="Genomic_DNA"/>
</dbReference>
<dbReference type="RefSeq" id="WP_010946102.1">
    <property type="nucleotide sequence ID" value="NC_002942.5"/>
</dbReference>
<dbReference type="RefSeq" id="YP_094397.1">
    <property type="nucleotide sequence ID" value="NC_002942.5"/>
</dbReference>
<dbReference type="SMR" id="Q5ZYL9"/>
<dbReference type="STRING" id="272624.lpg0353"/>
<dbReference type="PaxDb" id="272624-lpg0353"/>
<dbReference type="GeneID" id="57034356"/>
<dbReference type="KEGG" id="lpn:lpg0353"/>
<dbReference type="PATRIC" id="fig|272624.6.peg.360"/>
<dbReference type="eggNOG" id="COG0522">
    <property type="taxonomic scope" value="Bacteria"/>
</dbReference>
<dbReference type="HOGENOM" id="CLU_092403_0_2_6"/>
<dbReference type="OrthoDB" id="9803672at2"/>
<dbReference type="Proteomes" id="UP000000609">
    <property type="component" value="Chromosome"/>
</dbReference>
<dbReference type="GO" id="GO:0015935">
    <property type="term" value="C:small ribosomal subunit"/>
    <property type="evidence" value="ECO:0007669"/>
    <property type="project" value="InterPro"/>
</dbReference>
<dbReference type="GO" id="GO:0019843">
    <property type="term" value="F:rRNA binding"/>
    <property type="evidence" value="ECO:0007669"/>
    <property type="project" value="UniProtKB-UniRule"/>
</dbReference>
<dbReference type="GO" id="GO:0003735">
    <property type="term" value="F:structural constituent of ribosome"/>
    <property type="evidence" value="ECO:0007669"/>
    <property type="project" value="InterPro"/>
</dbReference>
<dbReference type="GO" id="GO:0042274">
    <property type="term" value="P:ribosomal small subunit biogenesis"/>
    <property type="evidence" value="ECO:0007669"/>
    <property type="project" value="TreeGrafter"/>
</dbReference>
<dbReference type="GO" id="GO:0006412">
    <property type="term" value="P:translation"/>
    <property type="evidence" value="ECO:0007669"/>
    <property type="project" value="UniProtKB-UniRule"/>
</dbReference>
<dbReference type="CDD" id="cd00165">
    <property type="entry name" value="S4"/>
    <property type="match status" value="1"/>
</dbReference>
<dbReference type="FunFam" id="1.10.1050.10:FF:000001">
    <property type="entry name" value="30S ribosomal protein S4"/>
    <property type="match status" value="1"/>
</dbReference>
<dbReference type="FunFam" id="3.10.290.10:FF:000001">
    <property type="entry name" value="30S ribosomal protein S4"/>
    <property type="match status" value="1"/>
</dbReference>
<dbReference type="Gene3D" id="1.10.1050.10">
    <property type="entry name" value="Ribosomal Protein S4 Delta 41, Chain A, domain 1"/>
    <property type="match status" value="1"/>
</dbReference>
<dbReference type="Gene3D" id="3.10.290.10">
    <property type="entry name" value="RNA-binding S4 domain"/>
    <property type="match status" value="1"/>
</dbReference>
<dbReference type="HAMAP" id="MF_01306_B">
    <property type="entry name" value="Ribosomal_uS4_B"/>
    <property type="match status" value="1"/>
</dbReference>
<dbReference type="InterPro" id="IPR022801">
    <property type="entry name" value="Ribosomal_uS4"/>
</dbReference>
<dbReference type="InterPro" id="IPR005709">
    <property type="entry name" value="Ribosomal_uS4_bac-type"/>
</dbReference>
<dbReference type="InterPro" id="IPR018079">
    <property type="entry name" value="Ribosomal_uS4_CS"/>
</dbReference>
<dbReference type="InterPro" id="IPR001912">
    <property type="entry name" value="Ribosomal_uS4_N"/>
</dbReference>
<dbReference type="InterPro" id="IPR002942">
    <property type="entry name" value="S4_RNA-bd"/>
</dbReference>
<dbReference type="InterPro" id="IPR036986">
    <property type="entry name" value="S4_RNA-bd_sf"/>
</dbReference>
<dbReference type="NCBIfam" id="NF003717">
    <property type="entry name" value="PRK05327.1"/>
    <property type="match status" value="1"/>
</dbReference>
<dbReference type="NCBIfam" id="TIGR01017">
    <property type="entry name" value="rpsD_bact"/>
    <property type="match status" value="1"/>
</dbReference>
<dbReference type="PANTHER" id="PTHR11831">
    <property type="entry name" value="30S 40S RIBOSOMAL PROTEIN"/>
    <property type="match status" value="1"/>
</dbReference>
<dbReference type="PANTHER" id="PTHR11831:SF4">
    <property type="entry name" value="SMALL RIBOSOMAL SUBUNIT PROTEIN US4M"/>
    <property type="match status" value="1"/>
</dbReference>
<dbReference type="Pfam" id="PF00163">
    <property type="entry name" value="Ribosomal_S4"/>
    <property type="match status" value="1"/>
</dbReference>
<dbReference type="Pfam" id="PF01479">
    <property type="entry name" value="S4"/>
    <property type="match status" value="1"/>
</dbReference>
<dbReference type="SMART" id="SM01390">
    <property type="entry name" value="Ribosomal_S4"/>
    <property type="match status" value="1"/>
</dbReference>
<dbReference type="SMART" id="SM00363">
    <property type="entry name" value="S4"/>
    <property type="match status" value="1"/>
</dbReference>
<dbReference type="SUPFAM" id="SSF55174">
    <property type="entry name" value="Alpha-L RNA-binding motif"/>
    <property type="match status" value="1"/>
</dbReference>
<dbReference type="PROSITE" id="PS00632">
    <property type="entry name" value="RIBOSOMAL_S4"/>
    <property type="match status" value="1"/>
</dbReference>
<dbReference type="PROSITE" id="PS50889">
    <property type="entry name" value="S4"/>
    <property type="match status" value="1"/>
</dbReference>
<reference key="1">
    <citation type="journal article" date="2004" name="Science">
        <title>The genomic sequence of the accidental pathogen Legionella pneumophila.</title>
        <authorList>
            <person name="Chien M."/>
            <person name="Morozova I."/>
            <person name="Shi S."/>
            <person name="Sheng H."/>
            <person name="Chen J."/>
            <person name="Gomez S.M."/>
            <person name="Asamani G."/>
            <person name="Hill K."/>
            <person name="Nuara J."/>
            <person name="Feder M."/>
            <person name="Rineer J."/>
            <person name="Greenberg J.J."/>
            <person name="Steshenko V."/>
            <person name="Park S.H."/>
            <person name="Zhao B."/>
            <person name="Teplitskaya E."/>
            <person name="Edwards J.R."/>
            <person name="Pampou S."/>
            <person name="Georghiou A."/>
            <person name="Chou I.-C."/>
            <person name="Iannuccilli W."/>
            <person name="Ulz M.E."/>
            <person name="Kim D.H."/>
            <person name="Geringer-Sameth A."/>
            <person name="Goldsberry C."/>
            <person name="Morozov P."/>
            <person name="Fischer S.G."/>
            <person name="Segal G."/>
            <person name="Qu X."/>
            <person name="Rzhetsky A."/>
            <person name="Zhang P."/>
            <person name="Cayanis E."/>
            <person name="De Jong P.J."/>
            <person name="Ju J."/>
            <person name="Kalachikov S."/>
            <person name="Shuman H.A."/>
            <person name="Russo J.J."/>
        </authorList>
    </citation>
    <scope>NUCLEOTIDE SEQUENCE [LARGE SCALE GENOMIC DNA]</scope>
    <source>
        <strain>Philadelphia 1 / ATCC 33152 / DSM 7513</strain>
    </source>
</reference>
<proteinExistence type="inferred from homology"/>
<sequence>MARYLGPKCKLSRREGCDLLLKSGVRDHKSKCKSEKLPGQHGDKKPRLNSYGIQLREKQKIRRLYGILEKQFRNYYKKAARQKGSTGENLMALLERRLDNVVYRMGFASTRAEARQLVAHKAILVNDKVVNVPSFLVNPGDTVSVRQKAKNQGRIQAALALSEQRAPCDWITVDTGSFKGTFSTAPTLMDLSSDYNVNLVVELYSK</sequence>
<feature type="chain" id="PRO_0000132400" description="Small ribosomal subunit protein uS4">
    <location>
        <begin position="1"/>
        <end position="206"/>
    </location>
</feature>
<feature type="domain" description="S4 RNA-binding" evidence="1">
    <location>
        <begin position="96"/>
        <end position="161"/>
    </location>
</feature>
<comment type="function">
    <text evidence="1">One of the primary rRNA binding proteins, it binds directly to 16S rRNA where it nucleates assembly of the body of the 30S subunit.</text>
</comment>
<comment type="function">
    <text evidence="1">With S5 and S12 plays an important role in translational accuracy.</text>
</comment>
<comment type="subunit">
    <text evidence="1">Part of the 30S ribosomal subunit. Contacts protein S5. The interaction surface between S4 and S5 is involved in control of translational fidelity.</text>
</comment>
<comment type="similarity">
    <text evidence="1">Belongs to the universal ribosomal protein uS4 family.</text>
</comment>
<evidence type="ECO:0000255" key="1">
    <source>
        <dbReference type="HAMAP-Rule" id="MF_01306"/>
    </source>
</evidence>
<evidence type="ECO:0000305" key="2"/>